<gene>
    <name type="ordered locus">PM0980</name>
</gene>
<sequence length="246" mass="26343">MAGHSKWANIKHRKAAQDAQRGKIFTKLIRELVTAAKLGGGDVNANPRLRTAVDKALSSNMTRDTINRAIERGVGGGDDTNMETKIYEGYGPGGTAVMVECLSDNANRTISQVRPSFTKCGGNLGTEGSVGYLFSKKGLILITSGDEDVIMEAAIEAGADDVQVQEDGSFEVYTAWEELGAVRDGIESAGIKIDNAEVTMIPSTTVELDAETAPKLLKLIDMLEDCDDVQNVYHNGEISDEIAAML</sequence>
<name>Y980_PASMU</name>
<reference key="1">
    <citation type="journal article" date="2001" name="Proc. Natl. Acad. Sci. U.S.A.">
        <title>Complete genomic sequence of Pasteurella multocida Pm70.</title>
        <authorList>
            <person name="May B.J."/>
            <person name="Zhang Q."/>
            <person name="Li L.L."/>
            <person name="Paustian M.L."/>
            <person name="Whittam T.S."/>
            <person name="Kapur V."/>
        </authorList>
    </citation>
    <scope>NUCLEOTIDE SEQUENCE [LARGE SCALE GENOMIC DNA]</scope>
    <source>
        <strain>Pm70</strain>
    </source>
</reference>
<organism>
    <name type="scientific">Pasteurella multocida (strain Pm70)</name>
    <dbReference type="NCBI Taxonomy" id="272843"/>
    <lineage>
        <taxon>Bacteria</taxon>
        <taxon>Pseudomonadati</taxon>
        <taxon>Pseudomonadota</taxon>
        <taxon>Gammaproteobacteria</taxon>
        <taxon>Pasteurellales</taxon>
        <taxon>Pasteurellaceae</taxon>
        <taxon>Pasteurella</taxon>
    </lineage>
</organism>
<proteinExistence type="inferred from homology"/>
<protein>
    <recommendedName>
        <fullName evidence="1">Probable transcriptional regulatory protein PM0980</fullName>
    </recommendedName>
</protein>
<accession>Q9CM61</accession>
<feature type="chain" id="PRO_0000175861" description="Probable transcriptional regulatory protein PM0980">
    <location>
        <begin position="1"/>
        <end position="246"/>
    </location>
</feature>
<evidence type="ECO:0000255" key="1">
    <source>
        <dbReference type="HAMAP-Rule" id="MF_00693"/>
    </source>
</evidence>
<comment type="subcellular location">
    <subcellularLocation>
        <location evidence="1">Cytoplasm</location>
    </subcellularLocation>
</comment>
<comment type="similarity">
    <text evidence="1">Belongs to the TACO1 family.</text>
</comment>
<dbReference type="EMBL" id="AE004439">
    <property type="protein sequence ID" value="AAK03064.1"/>
    <property type="molecule type" value="Genomic_DNA"/>
</dbReference>
<dbReference type="RefSeq" id="WP_005722965.1">
    <property type="nucleotide sequence ID" value="NC_002663.1"/>
</dbReference>
<dbReference type="SMR" id="Q9CM61"/>
<dbReference type="STRING" id="272843.PM0980"/>
<dbReference type="EnsemblBacteria" id="AAK03064">
    <property type="protein sequence ID" value="AAK03064"/>
    <property type="gene ID" value="PM0980"/>
</dbReference>
<dbReference type="KEGG" id="pmu:PM0980"/>
<dbReference type="HOGENOM" id="CLU_062974_2_2_6"/>
<dbReference type="OrthoDB" id="9781053at2"/>
<dbReference type="Proteomes" id="UP000000809">
    <property type="component" value="Chromosome"/>
</dbReference>
<dbReference type="GO" id="GO:0005829">
    <property type="term" value="C:cytosol"/>
    <property type="evidence" value="ECO:0007669"/>
    <property type="project" value="TreeGrafter"/>
</dbReference>
<dbReference type="GO" id="GO:0003677">
    <property type="term" value="F:DNA binding"/>
    <property type="evidence" value="ECO:0007669"/>
    <property type="project" value="UniProtKB-UniRule"/>
</dbReference>
<dbReference type="GO" id="GO:0006355">
    <property type="term" value="P:regulation of DNA-templated transcription"/>
    <property type="evidence" value="ECO:0007669"/>
    <property type="project" value="UniProtKB-UniRule"/>
</dbReference>
<dbReference type="FunFam" id="1.10.10.200:FF:000001">
    <property type="entry name" value="Probable transcriptional regulatory protein YebC"/>
    <property type="match status" value="1"/>
</dbReference>
<dbReference type="FunFam" id="3.30.70.980:FF:000002">
    <property type="entry name" value="Probable transcriptional regulatory protein YebC"/>
    <property type="match status" value="1"/>
</dbReference>
<dbReference type="Gene3D" id="1.10.10.200">
    <property type="match status" value="1"/>
</dbReference>
<dbReference type="Gene3D" id="3.30.70.980">
    <property type="match status" value="2"/>
</dbReference>
<dbReference type="HAMAP" id="MF_00693">
    <property type="entry name" value="Transcrip_reg_TACO1"/>
    <property type="match status" value="1"/>
</dbReference>
<dbReference type="InterPro" id="IPR017856">
    <property type="entry name" value="Integrase-like_N"/>
</dbReference>
<dbReference type="InterPro" id="IPR048300">
    <property type="entry name" value="TACO1_YebC-like_2nd/3rd_dom"/>
</dbReference>
<dbReference type="InterPro" id="IPR049083">
    <property type="entry name" value="TACO1_YebC_N"/>
</dbReference>
<dbReference type="InterPro" id="IPR002876">
    <property type="entry name" value="Transcrip_reg_TACO1-like"/>
</dbReference>
<dbReference type="InterPro" id="IPR026564">
    <property type="entry name" value="Transcrip_reg_TACO1-like_dom3"/>
</dbReference>
<dbReference type="InterPro" id="IPR029072">
    <property type="entry name" value="YebC-like"/>
</dbReference>
<dbReference type="NCBIfam" id="NF001030">
    <property type="entry name" value="PRK00110.1"/>
    <property type="match status" value="1"/>
</dbReference>
<dbReference type="NCBIfam" id="NF009044">
    <property type="entry name" value="PRK12378.1"/>
    <property type="match status" value="1"/>
</dbReference>
<dbReference type="NCBIfam" id="TIGR01033">
    <property type="entry name" value="YebC/PmpR family DNA-binding transcriptional regulator"/>
    <property type="match status" value="1"/>
</dbReference>
<dbReference type="PANTHER" id="PTHR12532:SF6">
    <property type="entry name" value="TRANSCRIPTIONAL REGULATORY PROTEIN YEBC-RELATED"/>
    <property type="match status" value="1"/>
</dbReference>
<dbReference type="PANTHER" id="PTHR12532">
    <property type="entry name" value="TRANSLATIONAL ACTIVATOR OF CYTOCHROME C OXIDASE 1"/>
    <property type="match status" value="1"/>
</dbReference>
<dbReference type="Pfam" id="PF20772">
    <property type="entry name" value="TACO1_YebC_N"/>
    <property type="match status" value="1"/>
</dbReference>
<dbReference type="Pfam" id="PF01709">
    <property type="entry name" value="Transcrip_reg"/>
    <property type="match status" value="1"/>
</dbReference>
<dbReference type="SUPFAM" id="SSF75625">
    <property type="entry name" value="YebC-like"/>
    <property type="match status" value="1"/>
</dbReference>
<keyword id="KW-0963">Cytoplasm</keyword>
<keyword id="KW-0238">DNA-binding</keyword>
<keyword id="KW-1185">Reference proteome</keyword>
<keyword id="KW-0804">Transcription</keyword>
<keyword id="KW-0805">Transcription regulation</keyword>